<dbReference type="EMBL" id="AL009126">
    <property type="protein sequence ID" value="CAB15025.1"/>
    <property type="molecule type" value="Genomic_DNA"/>
</dbReference>
<dbReference type="PIR" id="E70004">
    <property type="entry name" value="E70004"/>
</dbReference>
<dbReference type="RefSeq" id="NP_390925.1">
    <property type="nucleotide sequence ID" value="NC_000964.3"/>
</dbReference>
<dbReference type="RefSeq" id="WP_003229117.1">
    <property type="nucleotide sequence ID" value="NZ_OZ025638.1"/>
</dbReference>
<dbReference type="SMR" id="O32073"/>
<dbReference type="FunCoup" id="O32073">
    <property type="interactions" value="46"/>
</dbReference>
<dbReference type="STRING" id="224308.BSU30470"/>
<dbReference type="PaxDb" id="224308-BSU30470"/>
<dbReference type="EnsemblBacteria" id="CAB15025">
    <property type="protein sequence ID" value="CAB15025"/>
    <property type="gene ID" value="BSU_30470"/>
</dbReference>
<dbReference type="GeneID" id="936521"/>
<dbReference type="KEGG" id="bsu:BSU30470"/>
<dbReference type="PATRIC" id="fig|224308.179.peg.3305"/>
<dbReference type="eggNOG" id="ENOG50306TD">
    <property type="taxonomic scope" value="Bacteria"/>
</dbReference>
<dbReference type="InParanoid" id="O32073"/>
<dbReference type="OrthoDB" id="2970872at2"/>
<dbReference type="BioCyc" id="BSUB:BSU30470-MONOMER"/>
<dbReference type="Proteomes" id="UP000001570">
    <property type="component" value="Chromosome"/>
</dbReference>
<dbReference type="InterPro" id="IPR019668">
    <property type="entry name" value="Uncharacterised_YtzC"/>
</dbReference>
<dbReference type="Pfam" id="PF10732">
    <property type="entry name" value="DUF2524"/>
    <property type="match status" value="1"/>
</dbReference>
<name>YTZC_BACSU</name>
<evidence type="ECO:0000255" key="1"/>
<gene>
    <name type="primary">ytzC</name>
    <name type="ordered locus">BSU30470</name>
</gene>
<proteinExistence type="predicted"/>
<organism>
    <name type="scientific">Bacillus subtilis (strain 168)</name>
    <dbReference type="NCBI Taxonomy" id="224308"/>
    <lineage>
        <taxon>Bacteria</taxon>
        <taxon>Bacillati</taxon>
        <taxon>Bacillota</taxon>
        <taxon>Bacilli</taxon>
        <taxon>Bacillales</taxon>
        <taxon>Bacillaceae</taxon>
        <taxon>Bacillus</taxon>
    </lineage>
</organism>
<accession>O32073</accession>
<keyword id="KW-0175">Coiled coil</keyword>
<keyword id="KW-1185">Reference proteome</keyword>
<sequence>MATRQSVDEHLQQCMQAYDYAEEQLKIASKQEHYNDQEYSDAQMQLEDAVNALNKLWLSSNDQQREQLYRMRLQLQSLQNNMILQHPLDV</sequence>
<reference key="1">
    <citation type="journal article" date="1997" name="Nature">
        <title>The complete genome sequence of the Gram-positive bacterium Bacillus subtilis.</title>
        <authorList>
            <person name="Kunst F."/>
            <person name="Ogasawara N."/>
            <person name="Moszer I."/>
            <person name="Albertini A.M."/>
            <person name="Alloni G."/>
            <person name="Azevedo V."/>
            <person name="Bertero M.G."/>
            <person name="Bessieres P."/>
            <person name="Bolotin A."/>
            <person name="Borchert S."/>
            <person name="Borriss R."/>
            <person name="Boursier L."/>
            <person name="Brans A."/>
            <person name="Braun M."/>
            <person name="Brignell S.C."/>
            <person name="Bron S."/>
            <person name="Brouillet S."/>
            <person name="Bruschi C.V."/>
            <person name="Caldwell B."/>
            <person name="Capuano V."/>
            <person name="Carter N.M."/>
            <person name="Choi S.-K."/>
            <person name="Codani J.-J."/>
            <person name="Connerton I.F."/>
            <person name="Cummings N.J."/>
            <person name="Daniel R.A."/>
            <person name="Denizot F."/>
            <person name="Devine K.M."/>
            <person name="Duesterhoeft A."/>
            <person name="Ehrlich S.D."/>
            <person name="Emmerson P.T."/>
            <person name="Entian K.-D."/>
            <person name="Errington J."/>
            <person name="Fabret C."/>
            <person name="Ferrari E."/>
            <person name="Foulger D."/>
            <person name="Fritz C."/>
            <person name="Fujita M."/>
            <person name="Fujita Y."/>
            <person name="Fuma S."/>
            <person name="Galizzi A."/>
            <person name="Galleron N."/>
            <person name="Ghim S.-Y."/>
            <person name="Glaser P."/>
            <person name="Goffeau A."/>
            <person name="Golightly E.J."/>
            <person name="Grandi G."/>
            <person name="Guiseppi G."/>
            <person name="Guy B.J."/>
            <person name="Haga K."/>
            <person name="Haiech J."/>
            <person name="Harwood C.R."/>
            <person name="Henaut A."/>
            <person name="Hilbert H."/>
            <person name="Holsappel S."/>
            <person name="Hosono S."/>
            <person name="Hullo M.-F."/>
            <person name="Itaya M."/>
            <person name="Jones L.-M."/>
            <person name="Joris B."/>
            <person name="Karamata D."/>
            <person name="Kasahara Y."/>
            <person name="Klaerr-Blanchard M."/>
            <person name="Klein C."/>
            <person name="Kobayashi Y."/>
            <person name="Koetter P."/>
            <person name="Koningstein G."/>
            <person name="Krogh S."/>
            <person name="Kumano M."/>
            <person name="Kurita K."/>
            <person name="Lapidus A."/>
            <person name="Lardinois S."/>
            <person name="Lauber J."/>
            <person name="Lazarevic V."/>
            <person name="Lee S.-M."/>
            <person name="Levine A."/>
            <person name="Liu H."/>
            <person name="Masuda S."/>
            <person name="Mauel C."/>
            <person name="Medigue C."/>
            <person name="Medina N."/>
            <person name="Mellado R.P."/>
            <person name="Mizuno M."/>
            <person name="Moestl D."/>
            <person name="Nakai S."/>
            <person name="Noback M."/>
            <person name="Noone D."/>
            <person name="O'Reilly M."/>
            <person name="Ogawa K."/>
            <person name="Ogiwara A."/>
            <person name="Oudega B."/>
            <person name="Park S.-H."/>
            <person name="Parro V."/>
            <person name="Pohl T.M."/>
            <person name="Portetelle D."/>
            <person name="Porwollik S."/>
            <person name="Prescott A.M."/>
            <person name="Presecan E."/>
            <person name="Pujic P."/>
            <person name="Purnelle B."/>
            <person name="Rapoport G."/>
            <person name="Rey M."/>
            <person name="Reynolds S."/>
            <person name="Rieger M."/>
            <person name="Rivolta C."/>
            <person name="Rocha E."/>
            <person name="Roche B."/>
            <person name="Rose M."/>
            <person name="Sadaie Y."/>
            <person name="Sato T."/>
            <person name="Scanlan E."/>
            <person name="Schleich S."/>
            <person name="Schroeter R."/>
            <person name="Scoffone F."/>
            <person name="Sekiguchi J."/>
            <person name="Sekowska A."/>
            <person name="Seror S.J."/>
            <person name="Serror P."/>
            <person name="Shin B.-S."/>
            <person name="Soldo B."/>
            <person name="Sorokin A."/>
            <person name="Tacconi E."/>
            <person name="Takagi T."/>
            <person name="Takahashi H."/>
            <person name="Takemaru K."/>
            <person name="Takeuchi M."/>
            <person name="Tamakoshi A."/>
            <person name="Tanaka T."/>
            <person name="Terpstra P."/>
            <person name="Tognoni A."/>
            <person name="Tosato V."/>
            <person name="Uchiyama S."/>
            <person name="Vandenbol M."/>
            <person name="Vannier F."/>
            <person name="Vassarotti A."/>
            <person name="Viari A."/>
            <person name="Wambutt R."/>
            <person name="Wedler E."/>
            <person name="Wedler H."/>
            <person name="Weitzenegger T."/>
            <person name="Winters P."/>
            <person name="Wipat A."/>
            <person name="Yamamoto H."/>
            <person name="Yamane K."/>
            <person name="Yasumoto K."/>
            <person name="Yata K."/>
            <person name="Yoshida K."/>
            <person name="Yoshikawa H.-F."/>
            <person name="Zumstein E."/>
            <person name="Yoshikawa H."/>
            <person name="Danchin A."/>
        </authorList>
    </citation>
    <scope>NUCLEOTIDE SEQUENCE [LARGE SCALE GENOMIC DNA]</scope>
    <source>
        <strain>168</strain>
    </source>
</reference>
<feature type="chain" id="PRO_0000049909" description="Uncharacterized protein YtzC">
    <location>
        <begin position="1"/>
        <end position="90"/>
    </location>
</feature>
<feature type="coiled-coil region" evidence="1">
    <location>
        <begin position="36"/>
        <end position="82"/>
    </location>
</feature>
<protein>
    <recommendedName>
        <fullName>Uncharacterized protein YtzC</fullName>
    </recommendedName>
</protein>